<evidence type="ECO:0000250" key="1"/>
<evidence type="ECO:0000250" key="2">
    <source>
        <dbReference type="UniProtKB" id="O35954"/>
    </source>
</evidence>
<evidence type="ECO:0000250" key="3">
    <source>
        <dbReference type="UniProtKB" id="Q5U2N3"/>
    </source>
</evidence>
<evidence type="ECO:0000255" key="4">
    <source>
        <dbReference type="PROSITE-ProRule" id="PRU00378"/>
    </source>
</evidence>
<evidence type="ECO:0000256" key="5">
    <source>
        <dbReference type="SAM" id="MobiDB-lite"/>
    </source>
</evidence>
<evidence type="ECO:0000269" key="6">
    <source>
    </source>
</evidence>
<evidence type="ECO:0000269" key="7">
    <source>
    </source>
</evidence>
<evidence type="ECO:0000269" key="8">
    <source>
    </source>
</evidence>
<evidence type="ECO:0000269" key="9">
    <source>
    </source>
</evidence>
<evidence type="ECO:0000269" key="10">
    <source>
    </source>
</evidence>
<evidence type="ECO:0000269" key="11">
    <source>
    </source>
</evidence>
<evidence type="ECO:0000269" key="12">
    <source>
    </source>
</evidence>
<evidence type="ECO:0000269" key="13">
    <source>
    </source>
</evidence>
<evidence type="ECO:0000303" key="14">
    <source>
    </source>
</evidence>
<evidence type="ECO:0000303" key="15">
    <source>
    </source>
</evidence>
<evidence type="ECO:0000305" key="16"/>
<evidence type="ECO:0000305" key="17">
    <source>
    </source>
</evidence>
<evidence type="ECO:0000305" key="18">
    <source>
    </source>
</evidence>
<evidence type="ECO:0007744" key="19">
    <source>
    </source>
</evidence>
<evidence type="ECO:0007744" key="20">
    <source>
    </source>
</evidence>
<sequence length="1244" mass="134848">MLIKEYHILLPMSLDEYQVAQLYMIQKKSREESSGEGSGVEILANRPYTDGPGGSGQYTHKVYHVGSHIPGWFRALLPKAALQVEEESWNAYPYTRTRYTCPFVEKFSIEIETYYLPDGGQQPNVFNLSGAERRQRILDTIDIVRDAVAPGEYKAEEDPRLYHSVKTGRGPLSDDWARTAAQTGPLMCAYKLCKVEFRYWGMQAKIEQFIHDVGLRRVMLRAHRQAWCWQDEWTELSMADIRALEEETARMLAQRMAKCNTGSEGSEAQPPGKPSTEARSAASNTGTPDGPEAPPGPDASPDASFGKQWSSSSRSSYSSQHGGAVSPQSLSEWRMQNIARDSENSSEEEFFDAHEGFSDSEEVFPKEMTKWNSNDFIDAFASPVEAEGTPEPGAEAAKGIEDGAQAPRDSEGLDGAGELGAEACAVHALFLILHSGNILDSGPGDANSKQADVQTLSSAFEAVTRIHFPEALGHVALRLVPCPPICAAAYALVSNLSPYSHDGDSLSRSQDHIPLAALPLLATSSSRYQGAVATVIARTNQAYSAFLRSPEGAGFCGQVALIGDGVGGILGFDALCHSANAGTGSRGSSRRGSMNNELLSPEFGPVRDPLADGVEGLGRGSPEPSALPPQRIPSDMASPEPEGSQNSLQAAPATTSSWEPRRASTAFCPPAASSEAPDGPSSTARLDFKVSGFFLFGSPLGLVLALRKTVMPALEAAQMRPACEQIYNLFHAADPCASRLEPLLAPKFQAIAPLTVPRYQKFPLGDGSSLLLADTLQTHSSLFLEELEMLVPSTPTSTSGAFWKGSELATDPPAQPAAPSTTSEVVKILERWWGTKRIDYSLYCPEALTAFPTVTLPHLFHASYWESADVVAFILRQVIEKERPQLAECEEPSIYSPAFPREKWQRKRTQVKIRNVTSNHRASDTVVCEGRPQVLSGRFMYGPLDVVTLTGEKVDVYIMTQPLSGKWIHFGTEVTNSSGRLTFPVPPERALGIGVYPVRMVVRGDHTYAECCLTVVARGTEAVVFSIDGSFTASVSIMGSDPKVRAGAVDVVRHWQDSGYLIVYVTGRPDMQKHRVVAWLSQHNFPHGVVSFCDGLTHDPLRQKAMFLQSLVQEVELNIVAGYGSPKDVAVYAALGLSPSQTYIVGRAVRKLQAQCQFLSDGYVAHLGQLEAGSHSHASSGPPRAALGKSSYGVAAPVDFLRKQSQLLRSRGPSQAEREGPGTPPTTLARGKARSISLKLDSEE</sequence>
<name>PITM1_HUMAN</name>
<comment type="function">
    <text evidence="6 7 8 11 12 13">Catalyzes the transfer of phosphatidylinositol (PI) between membranes (PubMed:10531358, PubMed:22822086). Binds PI, phosphatidylcholine (PC) and phosphatidic acid (PA) with the binding affinity order of PI &gt; PA &gt; PC (PubMed:22822086). Regulates RHOA activity, and plays a role in cytoskeleton remodeling (PubMed:11909959). Necessary for normal completion of cytokinesis (PubMed:15125835). Plays a role in maintaining normal diacylglycerol levels in the Golgi apparatus (PubMed:15723057). Necessary for maintaining the normal structure of the endoplasmic reticulum and the Golgi apparatus (PubMed:15545272). Required for protein export from the endoplasmic reticulum and the Golgi (PubMed:15723057). Binds calcium ions (PubMed:10022914).</text>
</comment>
<comment type="catalytic activity">
    <reaction evidence="7 13">
        <text>a 1,2-diacyl-sn-glycero-3-phospho-(1D-myo-inositol)(in) = a 1,2-diacyl-sn-glycero-3-phospho-(1D-myo-inositol)(out)</text>
        <dbReference type="Rhea" id="RHEA:38691"/>
        <dbReference type="ChEBI" id="CHEBI:57880"/>
    </reaction>
    <physiologicalReaction direction="left-to-right" evidence="18">
        <dbReference type="Rhea" id="RHEA:38692"/>
    </physiologicalReaction>
</comment>
<comment type="subunit">
    <text evidence="1 6 8 10 11">Interacts with PIK4CA (By similarity). Interacts with PTK2B via its C-terminus. Interacts with RHOA. Has higher affinity for the inactive, GDP-bound form of RHOA. The CDK1-phosphorylated form interacts with PLK1. Interacts with VAPB.</text>
</comment>
<comment type="interaction">
    <interactant intactId="EBI-2861268">
        <id>O00562</id>
    </interactant>
    <interactant intactId="EBI-717422">
        <id>Q12800</id>
        <label>TFCP2</label>
    </interactant>
    <organismsDiffer>false</organismsDiffer>
    <experiments>3</experiments>
</comment>
<comment type="subcellular location">
    <subcellularLocation>
        <location>Cytoplasm</location>
    </subcellularLocation>
    <subcellularLocation>
        <location evidence="9">Golgi apparatus</location>
        <location evidence="9">Golgi stack membrane</location>
        <topology>Peripheral membrane protein</topology>
    </subcellularLocation>
    <subcellularLocation>
        <location evidence="9">Endoplasmic reticulum membrane</location>
        <topology>Peripheral membrane protein</topology>
    </subcellularLocation>
    <subcellularLocation>
        <location evidence="9">Lipid droplet</location>
    </subcellularLocation>
    <subcellularLocation>
        <location evidence="10">Cleavage furrow</location>
    </subcellularLocation>
    <subcellularLocation>
        <location evidence="10">Midbody</location>
    </subcellularLocation>
    <text evidence="9 10">Peripheral membrane protein associated with Golgi stacks in interphase cells. A minor proportion is associated with the endoplasmic reticulum. Associated with lipid droplets (PubMed:12225667). Dissociates from the Golgi early on in mitosis and localizes to the cleavage furrow and midbody during cytokinesis (PubMed:15125835).</text>
</comment>
<comment type="alternative products">
    <event type="alternative splicing"/>
    <isoform>
        <id>O00562-1</id>
        <name>1</name>
        <sequence type="displayed"/>
    </isoform>
    <isoform>
        <id>O00562-2</id>
        <name>2</name>
        <sequence type="described" ref="VSP_021157"/>
    </isoform>
</comment>
<comment type="tissue specificity">
    <text evidence="6">Ubiquitous.</text>
</comment>
<comment type="PTM">
    <text>Phosphorylated on multiple sites by CDK1 at the onset of mitosis. Phosphorylation facilitates dissociation from the Golgi complex and is required for interaction with PLK1.</text>
</comment>
<comment type="PTM">
    <text>Phosphorylated on threonine residues upon treatment with oleic acid.</text>
</comment>
<comment type="PTM">
    <text>Phosphorylated on tyrosine residues by PTK2B.</text>
</comment>
<comment type="similarity">
    <text evidence="16">Belongs to the PtdIns transfer protein family. PI transfer class IIA subfamily.</text>
</comment>
<organism>
    <name type="scientific">Homo sapiens</name>
    <name type="common">Human</name>
    <dbReference type="NCBI Taxonomy" id="9606"/>
    <lineage>
        <taxon>Eukaryota</taxon>
        <taxon>Metazoa</taxon>
        <taxon>Chordata</taxon>
        <taxon>Craniata</taxon>
        <taxon>Vertebrata</taxon>
        <taxon>Euteleostomi</taxon>
        <taxon>Mammalia</taxon>
        <taxon>Eutheria</taxon>
        <taxon>Euarchontoglires</taxon>
        <taxon>Primates</taxon>
        <taxon>Haplorrhini</taxon>
        <taxon>Catarrhini</taxon>
        <taxon>Hominidae</taxon>
        <taxon>Homo</taxon>
    </lineage>
</organism>
<protein>
    <recommendedName>
        <fullName>Membrane-associated phosphatidylinositol transfer protein 1</fullName>
    </recommendedName>
    <alternativeName>
        <fullName>Drosophila retinal degeneration B homolog</fullName>
    </alternativeName>
    <alternativeName>
        <fullName>Phosphatidylinositol transfer protein, membrane-associated 1</fullName>
        <shortName>PITPnm 1</shortName>
    </alternativeName>
    <alternativeName>
        <fullName>Pyk2 N-terminal domain-interacting receptor 2</fullName>
        <shortName>NIR-2</shortName>
    </alternativeName>
</protein>
<dbReference type="EMBL" id="X98654">
    <property type="protein sequence ID" value="CAA67224.1"/>
    <property type="molecule type" value="mRNA"/>
</dbReference>
<dbReference type="EMBL" id="AF334584">
    <property type="protein sequence ID" value="AAK01444.1"/>
    <property type="molecule type" value="mRNA"/>
</dbReference>
<dbReference type="EMBL" id="AY429102">
    <property type="protein sequence ID" value="AAR06909.1"/>
    <property type="molecule type" value="mRNA"/>
</dbReference>
<dbReference type="EMBL" id="AP001184">
    <property type="status" value="NOT_ANNOTATED_CDS"/>
    <property type="molecule type" value="Genomic_DNA"/>
</dbReference>
<dbReference type="EMBL" id="CH471076">
    <property type="protein sequence ID" value="EAW74638.1"/>
    <property type="molecule type" value="Genomic_DNA"/>
</dbReference>
<dbReference type="EMBL" id="BC022230">
    <property type="protein sequence ID" value="AAH22230.1"/>
    <property type="molecule type" value="mRNA"/>
</dbReference>
<dbReference type="CCDS" id="CCDS31620.1">
    <molecule id="O00562-1"/>
</dbReference>
<dbReference type="CCDS" id="CCDS44659.1">
    <molecule id="O00562-2"/>
</dbReference>
<dbReference type="RefSeq" id="NP_001124320.1">
    <molecule id="O00562-2"/>
    <property type="nucleotide sequence ID" value="NM_001130848.2"/>
</dbReference>
<dbReference type="RefSeq" id="NP_004901.2">
    <molecule id="O00562-1"/>
    <property type="nucleotide sequence ID" value="NM_004910.3"/>
</dbReference>
<dbReference type="RefSeq" id="XP_016874075.1">
    <molecule id="O00562-1"/>
    <property type="nucleotide sequence ID" value="XM_017018586.2"/>
</dbReference>
<dbReference type="RefSeq" id="XP_047283861.1">
    <molecule id="O00562-1"/>
    <property type="nucleotide sequence ID" value="XM_047427905.1"/>
</dbReference>
<dbReference type="RefSeq" id="XP_047283862.1">
    <molecule id="O00562-1"/>
    <property type="nucleotide sequence ID" value="XM_047427906.1"/>
</dbReference>
<dbReference type="RefSeq" id="XP_047283863.1">
    <molecule id="O00562-1"/>
    <property type="nucleotide sequence ID" value="XM_047427907.1"/>
</dbReference>
<dbReference type="RefSeq" id="XP_047283864.1">
    <molecule id="O00562-2"/>
    <property type="nucleotide sequence ID" value="XM_047427908.1"/>
</dbReference>
<dbReference type="RefSeq" id="XP_047283865.1">
    <molecule id="O00562-2"/>
    <property type="nucleotide sequence ID" value="XM_047427909.1"/>
</dbReference>
<dbReference type="RefSeq" id="XP_047283866.1">
    <molecule id="O00562-2"/>
    <property type="nucleotide sequence ID" value="XM_047427910.1"/>
</dbReference>
<dbReference type="RefSeq" id="XP_054226561.1">
    <molecule id="O00562-1"/>
    <property type="nucleotide sequence ID" value="XM_054370586.1"/>
</dbReference>
<dbReference type="RefSeq" id="XP_054226562.1">
    <molecule id="O00562-1"/>
    <property type="nucleotide sequence ID" value="XM_054370587.1"/>
</dbReference>
<dbReference type="RefSeq" id="XP_054226563.1">
    <molecule id="O00562-1"/>
    <property type="nucleotide sequence ID" value="XM_054370588.1"/>
</dbReference>
<dbReference type="RefSeq" id="XP_054226564.1">
    <molecule id="O00562-1"/>
    <property type="nucleotide sequence ID" value="XM_054370589.1"/>
</dbReference>
<dbReference type="RefSeq" id="XP_054226565.1">
    <molecule id="O00562-2"/>
    <property type="nucleotide sequence ID" value="XM_054370590.1"/>
</dbReference>
<dbReference type="RefSeq" id="XP_054226566.1">
    <molecule id="O00562-2"/>
    <property type="nucleotide sequence ID" value="XM_054370591.1"/>
</dbReference>
<dbReference type="RefSeq" id="XP_054226567.1">
    <molecule id="O00562-2"/>
    <property type="nucleotide sequence ID" value="XM_054370592.1"/>
</dbReference>
<dbReference type="SMR" id="O00562"/>
<dbReference type="BioGRID" id="114965">
    <property type="interactions" value="18"/>
</dbReference>
<dbReference type="CORUM" id="O00562"/>
<dbReference type="ELM" id="O00562"/>
<dbReference type="FunCoup" id="O00562">
    <property type="interactions" value="1164"/>
</dbReference>
<dbReference type="IntAct" id="O00562">
    <property type="interactions" value="9"/>
</dbReference>
<dbReference type="MINT" id="O00562"/>
<dbReference type="STRING" id="9606.ENSP00000348772"/>
<dbReference type="ChEMBL" id="CHEMBL1764937"/>
<dbReference type="SwissLipids" id="SLP:000000414"/>
<dbReference type="TCDB" id="9.A.78.1.1">
    <property type="family name" value="the retinal degeneration b protein (rdgb) family"/>
</dbReference>
<dbReference type="GlyCosmos" id="O00562">
    <property type="glycosylation" value="2 sites, 1 glycan"/>
</dbReference>
<dbReference type="GlyGen" id="O00562">
    <property type="glycosylation" value="2 sites, 1 O-linked glycan (2 sites)"/>
</dbReference>
<dbReference type="iPTMnet" id="O00562"/>
<dbReference type="PhosphoSitePlus" id="O00562"/>
<dbReference type="BioMuta" id="PITPNM1"/>
<dbReference type="jPOST" id="O00562"/>
<dbReference type="MassIVE" id="O00562"/>
<dbReference type="PaxDb" id="9606-ENSP00000348772"/>
<dbReference type="PeptideAtlas" id="O00562"/>
<dbReference type="ProteomicsDB" id="47977">
    <molecule id="O00562-1"/>
</dbReference>
<dbReference type="ProteomicsDB" id="47978">
    <molecule id="O00562-2"/>
</dbReference>
<dbReference type="Pumba" id="O00562"/>
<dbReference type="Antibodypedia" id="30438">
    <property type="antibodies" value="223 antibodies from 27 providers"/>
</dbReference>
<dbReference type="DNASU" id="9600"/>
<dbReference type="Ensembl" id="ENST00000356404.8">
    <molecule id="O00562-1"/>
    <property type="protein sequence ID" value="ENSP00000348772.3"/>
    <property type="gene ID" value="ENSG00000110697.14"/>
</dbReference>
<dbReference type="Ensembl" id="ENST00000436757.7">
    <molecule id="O00562-2"/>
    <property type="protein sequence ID" value="ENSP00000398787.2"/>
    <property type="gene ID" value="ENSG00000110697.14"/>
</dbReference>
<dbReference type="Ensembl" id="ENST00000534749.5">
    <molecule id="O00562-1"/>
    <property type="protein sequence ID" value="ENSP00000437286.1"/>
    <property type="gene ID" value="ENSG00000110697.14"/>
</dbReference>
<dbReference type="GeneID" id="9600"/>
<dbReference type="KEGG" id="hsa:9600"/>
<dbReference type="MANE-Select" id="ENST00000356404.8">
    <property type="protein sequence ID" value="ENSP00000348772.3"/>
    <property type="RefSeq nucleotide sequence ID" value="NM_004910.3"/>
    <property type="RefSeq protein sequence ID" value="NP_004901.2"/>
</dbReference>
<dbReference type="UCSC" id="uc001olx.3">
    <molecule id="O00562-1"/>
    <property type="organism name" value="human"/>
</dbReference>
<dbReference type="AGR" id="HGNC:9003"/>
<dbReference type="CTD" id="9600"/>
<dbReference type="DisGeNET" id="9600"/>
<dbReference type="GeneCards" id="PITPNM1"/>
<dbReference type="HGNC" id="HGNC:9003">
    <property type="gene designation" value="PITPNM1"/>
</dbReference>
<dbReference type="HPA" id="ENSG00000110697">
    <property type="expression patterns" value="Low tissue specificity"/>
</dbReference>
<dbReference type="MIM" id="608794">
    <property type="type" value="gene"/>
</dbReference>
<dbReference type="neXtProt" id="NX_O00562"/>
<dbReference type="OpenTargets" id="ENSG00000110697"/>
<dbReference type="PharmGKB" id="PA33337"/>
<dbReference type="VEuPathDB" id="HostDB:ENSG00000110697"/>
<dbReference type="eggNOG" id="KOG3668">
    <property type="taxonomic scope" value="Eukaryota"/>
</dbReference>
<dbReference type="GeneTree" id="ENSGT00940000161522"/>
<dbReference type="HOGENOM" id="CLU_007179_0_0_1"/>
<dbReference type="InParanoid" id="O00562"/>
<dbReference type="OMA" id="EKVDIHM"/>
<dbReference type="OrthoDB" id="10053061at2759"/>
<dbReference type="PAN-GO" id="O00562">
    <property type="GO annotations" value="5 GO annotations based on evolutionary models"/>
</dbReference>
<dbReference type="PhylomeDB" id="O00562"/>
<dbReference type="TreeFam" id="TF312967"/>
<dbReference type="PathwayCommons" id="O00562"/>
<dbReference type="Reactome" id="R-HSA-1483226">
    <property type="pathway name" value="Synthesis of PI"/>
</dbReference>
<dbReference type="SignaLink" id="O00562"/>
<dbReference type="SIGNOR" id="O00562"/>
<dbReference type="BioGRID-ORCS" id="9600">
    <property type="hits" value="22 hits in 1161 CRISPR screens"/>
</dbReference>
<dbReference type="ChiTaRS" id="PITPNM1">
    <property type="organism name" value="human"/>
</dbReference>
<dbReference type="GeneWiki" id="PITPNM1"/>
<dbReference type="GenomeRNAi" id="9600"/>
<dbReference type="Pharos" id="O00562">
    <property type="development level" value="Tbio"/>
</dbReference>
<dbReference type="PRO" id="PR:O00562"/>
<dbReference type="Proteomes" id="UP000005640">
    <property type="component" value="Chromosome 11"/>
</dbReference>
<dbReference type="RNAct" id="O00562">
    <property type="molecule type" value="protein"/>
</dbReference>
<dbReference type="Bgee" id="ENSG00000110697">
    <property type="expression patterns" value="Expressed in granulocyte and 142 other cell types or tissues"/>
</dbReference>
<dbReference type="ExpressionAtlas" id="O00562">
    <property type="expression patterns" value="baseline and differential"/>
</dbReference>
<dbReference type="GO" id="GO:0044297">
    <property type="term" value="C:cell body"/>
    <property type="evidence" value="ECO:0000250"/>
    <property type="project" value="UniProtKB"/>
</dbReference>
<dbReference type="GO" id="GO:0032154">
    <property type="term" value="C:cleavage furrow"/>
    <property type="evidence" value="ECO:0007669"/>
    <property type="project" value="UniProtKB-SubCell"/>
</dbReference>
<dbReference type="GO" id="GO:0005737">
    <property type="term" value="C:cytoplasm"/>
    <property type="evidence" value="ECO:0000318"/>
    <property type="project" value="GO_Central"/>
</dbReference>
<dbReference type="GO" id="GO:0005829">
    <property type="term" value="C:cytosol"/>
    <property type="evidence" value="ECO:0000314"/>
    <property type="project" value="HPA"/>
</dbReference>
<dbReference type="GO" id="GO:0005789">
    <property type="term" value="C:endoplasmic reticulum membrane"/>
    <property type="evidence" value="ECO:0007669"/>
    <property type="project" value="UniProtKB-SubCell"/>
</dbReference>
<dbReference type="GO" id="GO:0032580">
    <property type="term" value="C:Golgi cisterna membrane"/>
    <property type="evidence" value="ECO:0007669"/>
    <property type="project" value="UniProtKB-SubCell"/>
</dbReference>
<dbReference type="GO" id="GO:0043231">
    <property type="term" value="C:intracellular membrane-bounded organelle"/>
    <property type="evidence" value="ECO:0000314"/>
    <property type="project" value="HPA"/>
</dbReference>
<dbReference type="GO" id="GO:0005811">
    <property type="term" value="C:lipid droplet"/>
    <property type="evidence" value="ECO:0007669"/>
    <property type="project" value="UniProtKB-SubCell"/>
</dbReference>
<dbReference type="GO" id="GO:0016020">
    <property type="term" value="C:membrane"/>
    <property type="evidence" value="ECO:0000304"/>
    <property type="project" value="ProtInc"/>
</dbReference>
<dbReference type="GO" id="GO:0030496">
    <property type="term" value="C:midbody"/>
    <property type="evidence" value="ECO:0007669"/>
    <property type="project" value="UniProtKB-SubCell"/>
</dbReference>
<dbReference type="GO" id="GO:0005509">
    <property type="term" value="F:calcium ion binding"/>
    <property type="evidence" value="ECO:0000314"/>
    <property type="project" value="UniProtKB"/>
</dbReference>
<dbReference type="GO" id="GO:0070300">
    <property type="term" value="F:phosphatidic acid binding"/>
    <property type="evidence" value="ECO:0000314"/>
    <property type="project" value="BHF-UCL"/>
</dbReference>
<dbReference type="GO" id="GO:0031210">
    <property type="term" value="F:phosphatidylcholine binding"/>
    <property type="evidence" value="ECO:0000314"/>
    <property type="project" value="BHF-UCL"/>
</dbReference>
<dbReference type="GO" id="GO:0008525">
    <property type="term" value="F:phosphatidylcholine transporter activity"/>
    <property type="evidence" value="ECO:0000318"/>
    <property type="project" value="GO_Central"/>
</dbReference>
<dbReference type="GO" id="GO:0035091">
    <property type="term" value="F:phosphatidylinositol binding"/>
    <property type="evidence" value="ECO:0000314"/>
    <property type="project" value="BHF-UCL"/>
</dbReference>
<dbReference type="GO" id="GO:0008526">
    <property type="term" value="F:phosphatidylinositol transfer activity"/>
    <property type="evidence" value="ECO:0000314"/>
    <property type="project" value="UniProtKB"/>
</dbReference>
<dbReference type="GO" id="GO:0030971">
    <property type="term" value="F:receptor tyrosine kinase binding"/>
    <property type="evidence" value="ECO:0000315"/>
    <property type="project" value="UniProtKB"/>
</dbReference>
<dbReference type="GO" id="GO:0007420">
    <property type="term" value="P:brain development"/>
    <property type="evidence" value="ECO:0000304"/>
    <property type="project" value="ProtInc"/>
</dbReference>
<dbReference type="GO" id="GO:0006629">
    <property type="term" value="P:lipid metabolic process"/>
    <property type="evidence" value="ECO:0000303"/>
    <property type="project" value="ProtInc"/>
</dbReference>
<dbReference type="GO" id="GO:0006661">
    <property type="term" value="P:phosphatidylinositol biosynthetic process"/>
    <property type="evidence" value="ECO:0000304"/>
    <property type="project" value="Reactome"/>
</dbReference>
<dbReference type="GO" id="GO:0015914">
    <property type="term" value="P:phospholipid transport"/>
    <property type="evidence" value="ECO:0000314"/>
    <property type="project" value="BHF-UCL"/>
</dbReference>
<dbReference type="GO" id="GO:0007602">
    <property type="term" value="P:phototransduction"/>
    <property type="evidence" value="ECO:0000304"/>
    <property type="project" value="ProtInc"/>
</dbReference>
<dbReference type="GO" id="GO:0015031">
    <property type="term" value="P:protein transport"/>
    <property type="evidence" value="ECO:0007669"/>
    <property type="project" value="UniProtKB-KW"/>
</dbReference>
<dbReference type="CDD" id="cd08889">
    <property type="entry name" value="SRPBCC_PITPNM1-2_like"/>
    <property type="match status" value="1"/>
</dbReference>
<dbReference type="FunFam" id="3.40.50.1000:FF:000173">
    <property type="entry name" value="Membrane-associated phosphatidylinositol transfer protein 2"/>
    <property type="match status" value="1"/>
</dbReference>
<dbReference type="FunFam" id="3.30.530.20:FF:000001">
    <property type="entry name" value="Phosphatidylinositol transfer protein membrane associated 2"/>
    <property type="match status" value="1"/>
</dbReference>
<dbReference type="Gene3D" id="3.30.530.20">
    <property type="match status" value="1"/>
</dbReference>
<dbReference type="Gene3D" id="3.40.50.1000">
    <property type="entry name" value="HAD superfamily/HAD-like"/>
    <property type="match status" value="1"/>
</dbReference>
<dbReference type="InterPro" id="IPR004177">
    <property type="entry name" value="DDHD_dom"/>
</dbReference>
<dbReference type="InterPro" id="IPR036412">
    <property type="entry name" value="HAD-like_sf"/>
</dbReference>
<dbReference type="InterPro" id="IPR023214">
    <property type="entry name" value="HAD_sf"/>
</dbReference>
<dbReference type="InterPro" id="IPR031315">
    <property type="entry name" value="LNS2/PITP"/>
</dbReference>
<dbReference type="InterPro" id="IPR001666">
    <property type="entry name" value="PI_transfer"/>
</dbReference>
<dbReference type="InterPro" id="IPR055261">
    <property type="entry name" value="PI_transfer_N"/>
</dbReference>
<dbReference type="InterPro" id="IPR023393">
    <property type="entry name" value="START-like_dom_sf"/>
</dbReference>
<dbReference type="PANTHER" id="PTHR10658:SF40">
    <property type="entry name" value="MEMBRANE-ASSOCIATED PHOSPHATIDYLINOSITOL TRANSFER PROTEIN 1"/>
    <property type="match status" value="1"/>
</dbReference>
<dbReference type="PANTHER" id="PTHR10658">
    <property type="entry name" value="PHOSPHATIDYLINOSITOL TRANSFER PROTEIN"/>
    <property type="match status" value="1"/>
</dbReference>
<dbReference type="Pfam" id="PF02862">
    <property type="entry name" value="DDHD"/>
    <property type="match status" value="2"/>
</dbReference>
<dbReference type="Pfam" id="PF02121">
    <property type="entry name" value="IP_trans"/>
    <property type="match status" value="1"/>
</dbReference>
<dbReference type="Pfam" id="PF24694">
    <property type="entry name" value="LNS2_PITM1-3"/>
    <property type="match status" value="1"/>
</dbReference>
<dbReference type="Pfam" id="PF24695">
    <property type="entry name" value="PITM1-3"/>
    <property type="match status" value="1"/>
</dbReference>
<dbReference type="PRINTS" id="PR00391">
    <property type="entry name" value="PITRANSFER"/>
</dbReference>
<dbReference type="SMART" id="SM01127">
    <property type="entry name" value="DDHD"/>
    <property type="match status" value="1"/>
</dbReference>
<dbReference type="SMART" id="SM00775">
    <property type="entry name" value="LNS2"/>
    <property type="match status" value="1"/>
</dbReference>
<dbReference type="SUPFAM" id="SSF55961">
    <property type="entry name" value="Bet v1-like"/>
    <property type="match status" value="1"/>
</dbReference>
<dbReference type="SUPFAM" id="SSF56784">
    <property type="entry name" value="HAD-like"/>
    <property type="match status" value="1"/>
</dbReference>
<dbReference type="PROSITE" id="PS51043">
    <property type="entry name" value="DDHD"/>
    <property type="match status" value="1"/>
</dbReference>
<accession>O00562</accession>
<accession>A6NME4</accession>
<accession>Q6T7X3</accession>
<accession>Q8TBN3</accession>
<accession>Q9BZ73</accession>
<proteinExistence type="evidence at protein level"/>
<keyword id="KW-0025">Alternative splicing</keyword>
<keyword id="KW-0106">Calcium</keyword>
<keyword id="KW-0963">Cytoplasm</keyword>
<keyword id="KW-0256">Endoplasmic reticulum</keyword>
<keyword id="KW-0333">Golgi apparatus</keyword>
<keyword id="KW-0551">Lipid droplet</keyword>
<keyword id="KW-0472">Membrane</keyword>
<keyword id="KW-0479">Metal-binding</keyword>
<keyword id="KW-0488">Methylation</keyword>
<keyword id="KW-0597">Phosphoprotein</keyword>
<keyword id="KW-0653">Protein transport</keyword>
<keyword id="KW-1267">Proteomics identification</keyword>
<keyword id="KW-1185">Reference proteome</keyword>
<keyword id="KW-0813">Transport</keyword>
<feature type="chain" id="PRO_0000232738" description="Membrane-associated phosphatidylinositol transfer protein 1">
    <location>
        <begin position="1"/>
        <end position="1244"/>
    </location>
</feature>
<feature type="domain" description="DDHD" evidence="4">
    <location>
        <begin position="686"/>
        <end position="880"/>
    </location>
</feature>
<feature type="region of interest" description="Disordered" evidence="5">
    <location>
        <begin position="258"/>
        <end position="331"/>
    </location>
</feature>
<feature type="region of interest" description="Disordered" evidence="5">
    <location>
        <begin position="339"/>
        <end position="358"/>
    </location>
</feature>
<feature type="region of interest" description="Disordered" evidence="5">
    <location>
        <begin position="581"/>
        <end position="682"/>
    </location>
</feature>
<feature type="region of interest" description="Disordered" evidence="5">
    <location>
        <begin position="1206"/>
        <end position="1244"/>
    </location>
</feature>
<feature type="compositionally biased region" description="Low complexity" evidence="5">
    <location>
        <begin position="299"/>
        <end position="319"/>
    </location>
</feature>
<feature type="compositionally biased region" description="Polar residues" evidence="5">
    <location>
        <begin position="643"/>
        <end position="658"/>
    </location>
</feature>
<feature type="modified residue" description="Phosphothreonine" evidence="17">
    <location>
        <position position="59"/>
    </location>
</feature>
<feature type="modified residue" description="Phosphothreonine; by CDK1" evidence="10">
    <location>
        <position position="287"/>
    </location>
</feature>
<feature type="modified residue" description="Phosphoserine" evidence="2">
    <location>
        <position position="300"/>
    </location>
</feature>
<feature type="modified residue" description="Phosphoserine" evidence="2">
    <location>
        <position position="304"/>
    </location>
</feature>
<feature type="modified residue" description="Phosphoserine" evidence="2">
    <location>
        <position position="319"/>
    </location>
</feature>
<feature type="modified residue" description="Phosphoserine" evidence="2">
    <location>
        <position position="326"/>
    </location>
</feature>
<feature type="modified residue" description="Phosphoserine" evidence="2">
    <location>
        <position position="329"/>
    </location>
</feature>
<feature type="modified residue" description="Phosphoserine" evidence="3">
    <location>
        <position position="342"/>
    </location>
</feature>
<feature type="modified residue" description="Phosphoserine" evidence="3">
    <location>
        <position position="345"/>
    </location>
</feature>
<feature type="modified residue" description="Phosphoserine" evidence="3">
    <location>
        <position position="346"/>
    </location>
</feature>
<feature type="modified residue" description="Phosphoserine" evidence="2">
    <location>
        <position position="373"/>
    </location>
</feature>
<feature type="modified residue" description="Phosphoserine; by CDK1" evidence="10">
    <location>
        <position position="382"/>
    </location>
</feature>
<feature type="modified residue" description="Phosphoserine" evidence="2">
    <location>
        <position position="593"/>
    </location>
</feature>
<feature type="modified residue" description="Phosphoserine" evidence="20">
    <location>
        <position position="600"/>
    </location>
</feature>
<feature type="modified residue" description="Phosphoserine" evidence="19 20">
    <location>
        <position position="621"/>
    </location>
</feature>
<feature type="modified residue" description="Phosphoserine" evidence="10">
    <location>
        <position position="896"/>
    </location>
</feature>
<feature type="modified residue" description="Omega-N-methylarginine" evidence="2">
    <location>
        <position position="1211"/>
    </location>
</feature>
<feature type="modified residue" description="Omega-N-methylarginine" evidence="2">
    <location>
        <position position="1218"/>
    </location>
</feature>
<feature type="modified residue" description="Phosphoserine" evidence="19">
    <location>
        <position position="1237"/>
    </location>
</feature>
<feature type="splice variant" id="VSP_021157" description="In isoform 2." evidence="14 15">
    <location>
        <position position="716"/>
    </location>
</feature>
<feature type="mutagenesis site" description="Prevents association with lipid droplets." evidence="9">
    <original>T</original>
    <variation>A</variation>
    <location>
        <position position="59"/>
    </location>
</feature>
<feature type="mutagenesis site" description="Causes association with lipid droplets." evidence="9">
    <original>T</original>
    <variation>E</variation>
    <location>
        <position position="59"/>
    </location>
</feature>
<feature type="mutagenesis site" description="Slightly reduced phosphorylation. Strongly reduced phosphorylation; when associated with A-794 or A-389. Loss of threonine phosphorylation; when associated with A-389; A-793 and A-1222." evidence="10">
    <original>T</original>
    <variation>A</variation>
    <location>
        <position position="287"/>
    </location>
</feature>
<feature type="mutagenesis site" description="No effect on phosphorylation." evidence="10">
    <original>S</original>
    <variation>A</variation>
    <location>
        <position position="300"/>
    </location>
</feature>
<feature type="mutagenesis site" description="No effect on phosphorylation." evidence="10">
    <original>S</original>
    <variation>A</variation>
    <location>
        <position position="326"/>
    </location>
</feature>
<feature type="mutagenesis site" description="Loss of interaction with VAPB." evidence="11">
    <original>EFFDA</original>
    <variation>ALLAG</variation>
    <location>
        <begin position="349"/>
        <end position="353"/>
    </location>
</feature>
<feature type="mutagenesis site" description="Strongly reduced phosphorylation." evidence="10">
    <original>S</original>
    <variation>A</variation>
    <location>
        <position position="382"/>
    </location>
</feature>
<feature type="mutagenesis site" description="No detectable effect on phosphorylation; when associated with A-793 and A-1222. Strongly reduced phosphorylation; when associated with A-287. Loss of threonine phosphorylation; when associated with A-287; A-794 and A-1222." evidence="10">
    <original>T</original>
    <variation>A</variation>
    <location>
        <position position="389"/>
    </location>
</feature>
<feature type="mutagenesis site" description="No detectable effect on phosphorylation; when associated with A-389 and A-1222. Strongly reduced phosphorylation; when associated with A-287. Loss of threonine phosphorylation; when associated with A-287; A-389 and A-1222." evidence="10">
    <original>T</original>
    <variation>A</variation>
    <location>
        <position position="794"/>
    </location>
</feature>
<feature type="mutagenesis site" description="Reduced phosphorylation." evidence="10">
    <original>S</original>
    <variation>A</variation>
    <location>
        <position position="896"/>
    </location>
</feature>
<feature type="mutagenesis site" description="No detectable effect on phosphorylation; when associated with A-389 and A-793. Loss of threonine phosphorylation; when associated with A-287; A-389 and A-794." evidence="10">
    <original>T</original>
    <variation>A</variation>
    <location>
        <position position="1223"/>
    </location>
</feature>
<feature type="sequence conflict" description="In Ref. 2; AAK01444." evidence="16" ref="2">
    <original>R</original>
    <variation>P</variation>
    <location>
        <position position="931"/>
    </location>
</feature>
<feature type="sequence conflict" description="In Ref. 3; AAR06909." evidence="16" ref="3">
    <original>S</original>
    <variation>G</variation>
    <location>
        <position position="1034"/>
    </location>
</feature>
<feature type="sequence conflict" description="In Ref. 1; CAA67224." evidence="16" ref="1">
    <original>E</original>
    <variation>G</variation>
    <location>
        <position position="1116"/>
    </location>
</feature>
<feature type="sequence conflict" description="In Ref. 1; CAA67224." evidence="16" ref="1">
    <original>A</original>
    <variation>T</variation>
    <location>
        <position position="1133"/>
    </location>
</feature>
<gene>
    <name type="primary">PITPNM1</name>
    <name type="synonym">DRES9</name>
    <name type="synonym">NIR2</name>
    <name type="synonym">PITPNM</name>
</gene>
<reference key="1">
    <citation type="journal article" date="1997" name="Genes Funct.">
        <title>A mammalian homologue of the Drosophila retinal degeneration B gene: implications for the evolution of phototransduction mechanisms.</title>
        <authorList>
            <person name="Rubboli F."/>
            <person name="Bulfone A."/>
            <person name="Bogni S."/>
            <person name="Marchitiello A."/>
            <person name="Zollo M."/>
            <person name="Borsani G."/>
            <person name="Ballabio A."/>
            <person name="Banfi S."/>
        </authorList>
    </citation>
    <scope>NUCLEOTIDE SEQUENCE [MRNA] (ISOFORM 1)</scope>
</reference>
<reference key="2">
    <citation type="journal article" date="1999" name="Mol. Cell. Biol.">
        <title>Identification of a novel family of targets of PYK2 related to Drosophila retinal degeneration B (rdgB) protein.</title>
        <authorList>
            <person name="Lev S."/>
            <person name="Hernandez J."/>
            <person name="Martinez R."/>
            <person name="Chen A."/>
            <person name="Plowman G."/>
            <person name="Schlessinger J."/>
        </authorList>
    </citation>
    <scope>NUCLEOTIDE SEQUENCE [MRNA] (ISOFORM 1)</scope>
    <scope>FUNCTION</scope>
    <scope>CALCIUM-BINDING</scope>
    <scope>INTERACTION WITH PTK2B</scope>
    <scope>PHOSPHORYLATION</scope>
    <scope>TISSUE SPECIFICITY</scope>
    <source>
        <tissue>Brain</tissue>
    </source>
</reference>
<reference key="3">
    <citation type="journal article" date="2005" name="Cytogenet. Genome Res.">
        <title>Chromosomal localization, genomic organization and evolution of the genes encoding human phosphatidylinositol transfer protein membrane-associated (PITPNM) 1, 2 and 3.</title>
        <authorList>
            <person name="Ocaka L."/>
            <person name="Spalluto C."/>
            <person name="Wilson D.I."/>
            <person name="Hunt D.M."/>
            <person name="Halford S."/>
        </authorList>
    </citation>
    <scope>NUCLEOTIDE SEQUENCE [MRNA] (ISOFORM 2)</scope>
</reference>
<reference key="4">
    <citation type="journal article" date="2006" name="Nature">
        <title>Human chromosome 11 DNA sequence and analysis including novel gene identification.</title>
        <authorList>
            <person name="Taylor T.D."/>
            <person name="Noguchi H."/>
            <person name="Totoki Y."/>
            <person name="Toyoda A."/>
            <person name="Kuroki Y."/>
            <person name="Dewar K."/>
            <person name="Lloyd C."/>
            <person name="Itoh T."/>
            <person name="Takeda T."/>
            <person name="Kim D.-W."/>
            <person name="She X."/>
            <person name="Barlow K.F."/>
            <person name="Bloom T."/>
            <person name="Bruford E."/>
            <person name="Chang J.L."/>
            <person name="Cuomo C.A."/>
            <person name="Eichler E."/>
            <person name="FitzGerald M.G."/>
            <person name="Jaffe D.B."/>
            <person name="LaButti K."/>
            <person name="Nicol R."/>
            <person name="Park H.-S."/>
            <person name="Seaman C."/>
            <person name="Sougnez C."/>
            <person name="Yang X."/>
            <person name="Zimmer A.R."/>
            <person name="Zody M.C."/>
            <person name="Birren B.W."/>
            <person name="Nusbaum C."/>
            <person name="Fujiyama A."/>
            <person name="Hattori M."/>
            <person name="Rogers J."/>
            <person name="Lander E.S."/>
            <person name="Sakaki Y."/>
        </authorList>
    </citation>
    <scope>NUCLEOTIDE SEQUENCE [LARGE SCALE GENOMIC DNA]</scope>
</reference>
<reference key="5">
    <citation type="submission" date="2005-07" db="EMBL/GenBank/DDBJ databases">
        <authorList>
            <person name="Mural R.J."/>
            <person name="Istrail S."/>
            <person name="Sutton G.G."/>
            <person name="Florea L."/>
            <person name="Halpern A.L."/>
            <person name="Mobarry C.M."/>
            <person name="Lippert R."/>
            <person name="Walenz B."/>
            <person name="Shatkay H."/>
            <person name="Dew I."/>
            <person name="Miller J.R."/>
            <person name="Flanigan M.J."/>
            <person name="Edwards N.J."/>
            <person name="Bolanos R."/>
            <person name="Fasulo D."/>
            <person name="Halldorsson B.V."/>
            <person name="Hannenhalli S."/>
            <person name="Turner R."/>
            <person name="Yooseph S."/>
            <person name="Lu F."/>
            <person name="Nusskern D.R."/>
            <person name="Shue B.C."/>
            <person name="Zheng X.H."/>
            <person name="Zhong F."/>
            <person name="Delcher A.L."/>
            <person name="Huson D.H."/>
            <person name="Kravitz S.A."/>
            <person name="Mouchard L."/>
            <person name="Reinert K."/>
            <person name="Remington K.A."/>
            <person name="Clark A.G."/>
            <person name="Waterman M.S."/>
            <person name="Eichler E.E."/>
            <person name="Adams M.D."/>
            <person name="Hunkapiller M.W."/>
            <person name="Myers E.W."/>
            <person name="Venter J.C."/>
        </authorList>
    </citation>
    <scope>NUCLEOTIDE SEQUENCE [LARGE SCALE GENOMIC DNA]</scope>
</reference>
<reference key="6">
    <citation type="journal article" date="2004" name="Genome Res.">
        <title>The status, quality, and expansion of the NIH full-length cDNA project: the Mammalian Gene Collection (MGC).</title>
        <authorList>
            <consortium name="The MGC Project Team"/>
        </authorList>
    </citation>
    <scope>NUCLEOTIDE SEQUENCE [LARGE SCALE MRNA] (ISOFORM 2)</scope>
    <source>
        <tissue>Duodenum</tissue>
    </source>
</reference>
<reference key="7">
    <citation type="journal article" date="1999" name="J. Biol. Chem.">
        <title>Cloning and characterization of a novel human phosphatidylinositol transfer protein, rdgBbeta.</title>
        <authorList>
            <person name="Fullwood Y."/>
            <person name="dos Santos M."/>
            <person name="Hsuan J.J."/>
        </authorList>
    </citation>
    <scope>FUNCTION</scope>
    <scope>CATALYTIC ACTIVITY</scope>
</reference>
<reference key="8">
    <citation type="journal article" date="2002" name="Curr. Biol.">
        <title>Targeting of Nir2 to lipid droplets is regulated by a specific threonine residue within its PI-transfer domain.</title>
        <authorList>
            <person name="Litvak V."/>
            <person name="Shaul Y.D."/>
            <person name="Shulewitz M."/>
            <person name="Amarilio R."/>
            <person name="Carmon S."/>
            <person name="Lev S."/>
        </authorList>
    </citation>
    <scope>SUBCELLULAR LOCATION</scope>
    <scope>MUTAGENESIS OF THR-59</scope>
    <scope>PHOSPHORYLATION AT THR-59</scope>
</reference>
<reference key="9">
    <citation type="journal article" date="2002" name="Mol. Cell. Biol.">
        <title>Nir2, a novel regulator of cell morphogenesis.</title>
        <authorList>
            <person name="Tian D."/>
            <person name="Litvak V."/>
            <person name="Toledo-Rodriguez M."/>
            <person name="Carmon S."/>
            <person name="Lev S."/>
        </authorList>
    </citation>
    <scope>FUNCTION</scope>
    <scope>INTERACTION WITH RHOA</scope>
</reference>
<reference key="10">
    <citation type="journal article" date="2004" name="Mol. Cell">
        <title>Mitotic phosphorylation of the peripheral Golgi protein Nir2 by Cdk1 provides a docking mechanism for Plk1 and affects cytokinesis completion.</title>
        <authorList>
            <person name="Litvak V."/>
            <person name="Argov R."/>
            <person name="Dahan N."/>
            <person name="Ramachandran S."/>
            <person name="Amarilio R."/>
            <person name="Shainskaya A."/>
            <person name="Lev S."/>
        </authorList>
    </citation>
    <scope>PHOSPHORYLATION AT THR-287; SER-382 AND SER-896</scope>
    <scope>IDENTIFICATION BY MASS SPECTROMETRY</scope>
    <scope>MUTAGENESIS OF THR-287; SER-300; SER-326; SER-382; THR-389; THR-794; SER-896 AND THR-1223</scope>
    <scope>INTERACTION WITH CDK1 AND PLK1</scope>
    <scope>SUBCELLULAR LOCATION</scope>
</reference>
<reference key="11">
    <citation type="journal article" date="2005" name="J. Biol. Chem.">
        <title>Differential regulation of endoplasmic reticulum structure through VAP-Nir protein interaction.</title>
        <authorList>
            <person name="Amarilio R."/>
            <person name="Ramachandran S."/>
            <person name="Sabanay H."/>
            <person name="Lev S."/>
        </authorList>
    </citation>
    <scope>FUNCTION</scope>
    <scope>INTERACTION WITH VAPB</scope>
    <scope>MUTAGENESIS OF 349-GLU--ALA-353</scope>
</reference>
<reference key="12">
    <citation type="journal article" date="2005" name="Nat. Cell Biol.">
        <title>Maintenance of the diacylglycerol level in the Golgi apparatus by the Nir2 protein is critical for Golgi secretory function.</title>
        <authorList>
            <person name="Litvak V."/>
            <person name="Dahan N."/>
            <person name="Ramachandran S."/>
            <person name="Sabanay H."/>
            <person name="Lev S."/>
        </authorList>
    </citation>
    <scope>FUNCTION</scope>
</reference>
<reference key="13">
    <citation type="journal article" date="2012" name="J. Biol. Chem.">
        <title>Phosphatidylinositol transfer protein, cytoplasmic 1 (PITPNC1) binds and transfers phosphatidic acid.</title>
        <authorList>
            <person name="Garner K."/>
            <person name="Hunt A.N."/>
            <person name="Koster G."/>
            <person name="Somerharju P."/>
            <person name="Groves E."/>
            <person name="Li M."/>
            <person name="Raghu P."/>
            <person name="Holic R."/>
            <person name="Cockcroft S."/>
        </authorList>
    </citation>
    <scope>FUNCTION</scope>
    <scope>CATALYTIC ACTIVITY</scope>
</reference>
<reference key="14">
    <citation type="journal article" date="2013" name="J. Proteome Res.">
        <title>Toward a comprehensive characterization of a human cancer cell phosphoproteome.</title>
        <authorList>
            <person name="Zhou H."/>
            <person name="Di Palma S."/>
            <person name="Preisinger C."/>
            <person name="Peng M."/>
            <person name="Polat A.N."/>
            <person name="Heck A.J."/>
            <person name="Mohammed S."/>
        </authorList>
    </citation>
    <scope>PHOSPHORYLATION [LARGE SCALE ANALYSIS] AT SER-621 AND SER-1237</scope>
    <scope>IDENTIFICATION BY MASS SPECTROMETRY [LARGE SCALE ANALYSIS]</scope>
    <source>
        <tissue>Cervix carcinoma</tissue>
        <tissue>Erythroleukemia</tissue>
    </source>
</reference>
<reference key="15">
    <citation type="journal article" date="2014" name="J. Proteomics">
        <title>An enzyme assisted RP-RPLC approach for in-depth analysis of human liver phosphoproteome.</title>
        <authorList>
            <person name="Bian Y."/>
            <person name="Song C."/>
            <person name="Cheng K."/>
            <person name="Dong M."/>
            <person name="Wang F."/>
            <person name="Huang J."/>
            <person name="Sun D."/>
            <person name="Wang L."/>
            <person name="Ye M."/>
            <person name="Zou H."/>
        </authorList>
    </citation>
    <scope>PHOSPHORYLATION [LARGE SCALE ANALYSIS] AT SER-600 AND SER-621</scope>
    <scope>IDENTIFICATION BY MASS SPECTROMETRY [LARGE SCALE ANALYSIS]</scope>
    <source>
        <tissue>Liver</tissue>
    </source>
</reference>